<sequence>MVDFKLSPSQLEARRHAQAFANTVLTKASAEYSTQKDQLSRFQATRPFYREAVRHGLIKAQVPIPLGGTMESLVHESIILEELFAVEPATSITIVATALGLMPVILCDSPSLQEKFLKPFISGEGEPLASLMHSEPNGTANWLQKGGPGLQTTARKVGNEWVISGEKLWPSNSGGWDYKGADLACVVCRVSDDPSKPQDPNVDPATQIAVLLVTRETIANNKKDAYQILGEPELAGHITTSGPHTRFTEFHVPHENLLCTPGLKAQGLVETAFAMSAALVGAMAIGTARAAFEEALVFAKSDTRGGSKHIIEHQSVADKLIDCKIRLETSRLLVWKAVTTLEDEALEWKVKLEMAMQTKIYTTDVAVECVIDAMKAVGMKSYAKDMSFPRLLNEVMCYPLFDGGNIGLRRRQMQRVMALEDYEPWAATYGSSKVDKSRL</sequence>
<feature type="chain" id="PRO_0000418397" description="Nitroalkane oxidase">
    <location>
        <begin position="1"/>
        <end position="439"/>
    </location>
</feature>
<feature type="active site" description="Proton acceptor" evidence="9 10 11">
    <location>
        <position position="402"/>
    </location>
</feature>
<feature type="binding site" evidence="3 4 6">
    <location>
        <begin position="131"/>
        <end position="134"/>
    </location>
    <ligand>
        <name>FAD</name>
        <dbReference type="ChEBI" id="CHEBI:57692"/>
    </ligand>
</feature>
<feature type="binding site" evidence="3 4 6">
    <location>
        <begin position="139"/>
        <end position="141"/>
    </location>
    <ligand>
        <name>FAD</name>
        <dbReference type="ChEBI" id="CHEBI:57692"/>
    </ligand>
</feature>
<feature type="binding site" evidence="3 4 6">
    <location>
        <begin position="169"/>
        <end position="171"/>
    </location>
    <ligand>
        <name>FAD</name>
        <dbReference type="ChEBI" id="CHEBI:57692"/>
    </ligand>
</feature>
<feature type="binding site" evidence="3 4 6">
    <location>
        <position position="304"/>
    </location>
    <ligand>
        <name>FAD</name>
        <dbReference type="ChEBI" id="CHEBI:57692"/>
    </ligand>
</feature>
<feature type="binding site" evidence="3 4 6">
    <location>
        <begin position="313"/>
        <end position="314"/>
    </location>
    <ligand>
        <name>FAD</name>
        <dbReference type="ChEBI" id="CHEBI:57692"/>
    </ligand>
</feature>
<feature type="binding site" evidence="3 4 6">
    <location>
        <begin position="375"/>
        <end position="379"/>
    </location>
    <ligand>
        <name>FAD</name>
        <dbReference type="ChEBI" id="CHEBI:57692"/>
    </ligand>
</feature>
<feature type="binding site" evidence="3 4 6">
    <location>
        <begin position="400"/>
        <end position="404"/>
    </location>
    <ligand>
        <name>FAD</name>
        <dbReference type="ChEBI" id="CHEBI:57692"/>
    </ligand>
</feature>
<feature type="mutagenesis site" description="Decreases catalytic activity about tenfold." evidence="5">
    <original>S</original>
    <variation>A</variation>
    <location>
        <position position="276"/>
    </location>
</feature>
<feature type="mutagenesis site" description="Decreases enzyme activity about twentyfold." evidence="1 2 5">
    <original>D</original>
    <variation>E</variation>
    <location>
        <position position="402"/>
    </location>
</feature>
<feature type="mutagenesis site" description="Almost abolishes enzyme activity towards neutral nitroethane, but retains activity towards anionic nitroethane." evidence="1 2 5">
    <original>D</original>
    <variation>N</variation>
    <location>
        <position position="402"/>
    </location>
</feature>
<feature type="mutagenesis site" description="Reduces catalytic activity." evidence="4">
    <original>R</original>
    <variation>K</variation>
    <location>
        <position position="409"/>
    </location>
</feature>
<feature type="helix" evidence="12">
    <location>
        <begin position="8"/>
        <end position="23"/>
    </location>
</feature>
<feature type="helix" evidence="12">
    <location>
        <begin position="25"/>
        <end position="27"/>
    </location>
</feature>
<feature type="helix" evidence="12">
    <location>
        <begin position="28"/>
        <end position="32"/>
    </location>
</feature>
<feature type="helix" evidence="12">
    <location>
        <begin position="38"/>
        <end position="43"/>
    </location>
</feature>
<feature type="helix" evidence="12">
    <location>
        <begin position="46"/>
        <end position="54"/>
    </location>
</feature>
<feature type="turn" evidence="12">
    <location>
        <begin position="55"/>
        <end position="58"/>
    </location>
</feature>
<feature type="helix" evidence="12">
    <location>
        <begin position="59"/>
        <end position="61"/>
    </location>
</feature>
<feature type="helix" evidence="12">
    <location>
        <begin position="64"/>
        <end position="66"/>
    </location>
</feature>
<feature type="helix" evidence="12">
    <location>
        <begin position="73"/>
        <end position="84"/>
    </location>
</feature>
<feature type="helix" evidence="12">
    <location>
        <begin position="91"/>
        <end position="106"/>
    </location>
</feature>
<feature type="helix" evidence="12">
    <location>
        <begin position="110"/>
        <end position="116"/>
    </location>
</feature>
<feature type="helix" evidence="12">
    <location>
        <begin position="118"/>
        <end position="121"/>
    </location>
</feature>
<feature type="strand" evidence="12">
    <location>
        <begin position="129"/>
        <end position="132"/>
    </location>
</feature>
<feature type="turn" evidence="12">
    <location>
        <begin position="140"/>
        <end position="143"/>
    </location>
</feature>
<feature type="strand" evidence="12">
    <location>
        <begin position="153"/>
        <end position="157"/>
    </location>
</feature>
<feature type="strand" evidence="12">
    <location>
        <begin position="160"/>
        <end position="168"/>
    </location>
</feature>
<feature type="turn" evidence="12">
    <location>
        <begin position="171"/>
        <end position="177"/>
    </location>
</feature>
<feature type="strand" evidence="12">
    <location>
        <begin position="182"/>
        <end position="190"/>
    </location>
</feature>
<feature type="helix" evidence="12">
    <location>
        <begin position="204"/>
        <end position="207"/>
    </location>
</feature>
<feature type="strand" evidence="12">
    <location>
        <begin position="208"/>
        <end position="213"/>
    </location>
</feature>
<feature type="helix" evidence="12">
    <location>
        <begin position="215"/>
        <end position="219"/>
    </location>
</feature>
<feature type="helix" evidence="12">
    <location>
        <begin position="223"/>
        <end position="225"/>
    </location>
</feature>
<feature type="strand" evidence="12">
    <location>
        <begin position="226"/>
        <end position="230"/>
    </location>
</feature>
<feature type="strand" evidence="12">
    <location>
        <begin position="234"/>
        <end position="236"/>
    </location>
</feature>
<feature type="strand" evidence="12">
    <location>
        <begin position="244"/>
        <end position="253"/>
    </location>
</feature>
<feature type="helix" evidence="12">
    <location>
        <begin position="254"/>
        <end position="256"/>
    </location>
</feature>
<feature type="helix" evidence="12">
    <location>
        <begin position="263"/>
        <end position="301"/>
    </location>
</feature>
<feature type="strand" evidence="12">
    <location>
        <begin position="306"/>
        <end position="308"/>
    </location>
</feature>
<feature type="helix" evidence="12">
    <location>
        <begin position="310"/>
        <end position="312"/>
    </location>
</feature>
<feature type="helix" evidence="12">
    <location>
        <begin position="314"/>
        <end position="341"/>
    </location>
</feature>
<feature type="strand" evidence="13">
    <location>
        <begin position="344"/>
        <end position="346"/>
    </location>
</feature>
<feature type="helix" evidence="12">
    <location>
        <begin position="348"/>
        <end position="377"/>
    </location>
</feature>
<feature type="helix" evidence="12">
    <location>
        <begin position="379"/>
        <end position="382"/>
    </location>
</feature>
<feature type="helix" evidence="12">
    <location>
        <begin position="388"/>
        <end position="395"/>
    </location>
</feature>
<feature type="turn" evidence="12">
    <location>
        <begin position="396"/>
        <end position="400"/>
    </location>
</feature>
<feature type="strand" evidence="12">
    <location>
        <begin position="401"/>
        <end position="403"/>
    </location>
</feature>
<feature type="turn" evidence="12">
    <location>
        <begin position="405"/>
        <end position="408"/>
    </location>
</feature>
<feature type="helix" evidence="12">
    <location>
        <begin position="409"/>
        <end position="417"/>
    </location>
</feature>
<feature type="helix" evidence="12">
    <location>
        <begin position="426"/>
        <end position="429"/>
    </location>
</feature>
<dbReference type="EC" id="1.7.3.1"/>
<dbReference type="EMBL" id="AF425595">
    <property type="protein sequence ID" value="AAL57485.1"/>
    <property type="molecule type" value="mRNA"/>
</dbReference>
<dbReference type="PDB" id="2C0U">
    <property type="method" value="X-ray"/>
    <property type="resolution" value="2.20 A"/>
    <property type="chains" value="A/B/C/D=1-439"/>
</dbReference>
<dbReference type="PDB" id="2C12">
    <property type="method" value="X-ray"/>
    <property type="resolution" value="2.07 A"/>
    <property type="chains" value="A/B/C/D/E/F=1-439"/>
</dbReference>
<dbReference type="PDB" id="2REH">
    <property type="method" value="X-ray"/>
    <property type="resolution" value="2.40 A"/>
    <property type="chains" value="A/B/C/D=1-439"/>
</dbReference>
<dbReference type="PDB" id="2ZAF">
    <property type="method" value="X-ray"/>
    <property type="resolution" value="2.50 A"/>
    <property type="chains" value="A/B/C/D=1-439"/>
</dbReference>
<dbReference type="PDB" id="3D9D">
    <property type="method" value="X-ray"/>
    <property type="resolution" value="2.10 A"/>
    <property type="chains" value="A/B/C/D=2-439"/>
</dbReference>
<dbReference type="PDB" id="3D9E">
    <property type="method" value="X-ray"/>
    <property type="resolution" value="2.20 A"/>
    <property type="chains" value="A/B/C/D=2-439"/>
</dbReference>
<dbReference type="PDB" id="3D9F">
    <property type="method" value="X-ray"/>
    <property type="resolution" value="2.20 A"/>
    <property type="chains" value="A/B/C/D=2-439"/>
</dbReference>
<dbReference type="PDB" id="3D9G">
    <property type="method" value="X-ray"/>
    <property type="resolution" value="2.15 A"/>
    <property type="chains" value="A/B/C/D=2-439"/>
</dbReference>
<dbReference type="PDB" id="3FCJ">
    <property type="method" value="X-ray"/>
    <property type="resolution" value="2.40 A"/>
    <property type="chains" value="A/B/C/D=2-439"/>
</dbReference>
<dbReference type="PDBsum" id="2C0U"/>
<dbReference type="PDBsum" id="2C12"/>
<dbReference type="PDBsum" id="2REH"/>
<dbReference type="PDBsum" id="2ZAF"/>
<dbReference type="PDBsum" id="3D9D"/>
<dbReference type="PDBsum" id="3D9E"/>
<dbReference type="PDBsum" id="3D9F"/>
<dbReference type="PDBsum" id="3D9G"/>
<dbReference type="PDBsum" id="3FCJ"/>
<dbReference type="SMR" id="Q8X1D8"/>
<dbReference type="KEGG" id="ag:AAL57485"/>
<dbReference type="VEuPathDB" id="FungiDB:FOC1_g10009155"/>
<dbReference type="VEuPathDB" id="FungiDB:FOC4_g10012108"/>
<dbReference type="VEuPathDB" id="FungiDB:FOIG_12289"/>
<dbReference type="VEuPathDB" id="FungiDB:FOMG_12667"/>
<dbReference type="VEuPathDB" id="FungiDB:FOXG_08703"/>
<dbReference type="VEuPathDB" id="FungiDB:FOZG_06512"/>
<dbReference type="VEuPathDB" id="FungiDB:HZS61_013072"/>
<dbReference type="BioCyc" id="MetaCyc:MONOMER-12547"/>
<dbReference type="BRENDA" id="1.7.3.1">
    <property type="organism ID" value="2351"/>
</dbReference>
<dbReference type="SABIO-RK" id="Q8X1D8"/>
<dbReference type="EvolutionaryTrace" id="Q8X1D8"/>
<dbReference type="GO" id="GO:0071949">
    <property type="term" value="F:FAD binding"/>
    <property type="evidence" value="ECO:0000314"/>
    <property type="project" value="UniProtKB"/>
</dbReference>
<dbReference type="GO" id="GO:0052664">
    <property type="term" value="F:nitroalkane oxidase activity"/>
    <property type="evidence" value="ECO:0000314"/>
    <property type="project" value="UniProtKB"/>
</dbReference>
<dbReference type="GO" id="GO:0016627">
    <property type="term" value="F:oxidoreductase activity, acting on the CH-CH group of donors"/>
    <property type="evidence" value="ECO:0007669"/>
    <property type="project" value="InterPro"/>
</dbReference>
<dbReference type="GO" id="GO:0046359">
    <property type="term" value="P:butyrate catabolic process"/>
    <property type="evidence" value="ECO:0007669"/>
    <property type="project" value="TreeGrafter"/>
</dbReference>
<dbReference type="GO" id="GO:0098754">
    <property type="term" value="P:detoxification"/>
    <property type="evidence" value="ECO:0000304"/>
    <property type="project" value="UniProtKB"/>
</dbReference>
<dbReference type="GO" id="GO:0033539">
    <property type="term" value="P:fatty acid beta-oxidation using acyl-CoA dehydrogenase"/>
    <property type="evidence" value="ECO:0007669"/>
    <property type="project" value="TreeGrafter"/>
</dbReference>
<dbReference type="CDD" id="cd00567">
    <property type="entry name" value="ACAD"/>
    <property type="match status" value="1"/>
</dbReference>
<dbReference type="FunFam" id="1.10.540.10:FF:000031">
    <property type="entry name" value="Nitroalkane oxidase"/>
    <property type="match status" value="1"/>
</dbReference>
<dbReference type="FunFam" id="1.20.140.10:FF:000038">
    <property type="entry name" value="Nitroalkane oxidase"/>
    <property type="match status" value="1"/>
</dbReference>
<dbReference type="FunFam" id="2.40.110.10:FF:000022">
    <property type="entry name" value="Nitroalkane oxidase"/>
    <property type="match status" value="1"/>
</dbReference>
<dbReference type="Gene3D" id="1.10.540.10">
    <property type="entry name" value="Acyl-CoA dehydrogenase/oxidase, N-terminal domain"/>
    <property type="match status" value="1"/>
</dbReference>
<dbReference type="Gene3D" id="2.40.110.10">
    <property type="entry name" value="Butyryl-CoA Dehydrogenase, subunit A, domain 2"/>
    <property type="match status" value="1"/>
</dbReference>
<dbReference type="Gene3D" id="1.20.140.10">
    <property type="entry name" value="Butyryl-CoA Dehydrogenase, subunit A, domain 3"/>
    <property type="match status" value="1"/>
</dbReference>
<dbReference type="InterPro" id="IPR046373">
    <property type="entry name" value="Acyl-CoA_Oxase/DH_mid-dom_sf"/>
</dbReference>
<dbReference type="InterPro" id="IPR036250">
    <property type="entry name" value="AcylCo_DH-like_C"/>
</dbReference>
<dbReference type="InterPro" id="IPR009075">
    <property type="entry name" value="AcylCo_DH/oxidase_C"/>
</dbReference>
<dbReference type="InterPro" id="IPR013786">
    <property type="entry name" value="AcylCoA_DH/ox_N"/>
</dbReference>
<dbReference type="InterPro" id="IPR037069">
    <property type="entry name" value="AcylCoA_DH/ox_N_sf"/>
</dbReference>
<dbReference type="InterPro" id="IPR009100">
    <property type="entry name" value="AcylCoA_DH/oxidase_NM_dom_sf"/>
</dbReference>
<dbReference type="PANTHER" id="PTHR43884">
    <property type="entry name" value="ACYL-COA DEHYDROGENASE"/>
    <property type="match status" value="1"/>
</dbReference>
<dbReference type="PANTHER" id="PTHR43884:SF12">
    <property type="entry name" value="ISOVALERYL-COA DEHYDROGENASE, MITOCHONDRIAL-RELATED"/>
    <property type="match status" value="1"/>
</dbReference>
<dbReference type="Pfam" id="PF00441">
    <property type="entry name" value="Acyl-CoA_dh_1"/>
    <property type="match status" value="1"/>
</dbReference>
<dbReference type="Pfam" id="PF02771">
    <property type="entry name" value="Acyl-CoA_dh_N"/>
    <property type="match status" value="1"/>
</dbReference>
<dbReference type="SUPFAM" id="SSF47203">
    <property type="entry name" value="Acyl-CoA dehydrogenase C-terminal domain-like"/>
    <property type="match status" value="1"/>
</dbReference>
<dbReference type="SUPFAM" id="SSF56645">
    <property type="entry name" value="Acyl-CoA dehydrogenase NM domain-like"/>
    <property type="match status" value="1"/>
</dbReference>
<protein>
    <recommendedName>
        <fullName>Nitroalkane oxidase</fullName>
        <shortName>NAO</shortName>
        <ecNumber>1.7.3.1</ecNumber>
    </recommendedName>
</protein>
<organism>
    <name type="scientific">Fusarium oxysporum</name>
    <name type="common">Fusarium vascular wilt</name>
    <dbReference type="NCBI Taxonomy" id="5507"/>
    <lineage>
        <taxon>Eukaryota</taxon>
        <taxon>Fungi</taxon>
        <taxon>Dikarya</taxon>
        <taxon>Ascomycota</taxon>
        <taxon>Pezizomycotina</taxon>
        <taxon>Sordariomycetes</taxon>
        <taxon>Hypocreomycetidae</taxon>
        <taxon>Hypocreales</taxon>
        <taxon>Nectriaceae</taxon>
        <taxon>Fusarium</taxon>
        <taxon>Fusarium oxysporum species complex</taxon>
    </lineage>
</organism>
<keyword id="KW-0002">3D-structure</keyword>
<keyword id="KW-0903">Direct protein sequencing</keyword>
<keyword id="KW-0274">FAD</keyword>
<keyword id="KW-0285">Flavoprotein</keyword>
<keyword id="KW-0547">Nucleotide-binding</keyword>
<keyword id="KW-0560">Oxidoreductase</keyword>
<name>NAO_FUSOX</name>
<evidence type="ECO:0000269" key="1">
    <source>
    </source>
</evidence>
<evidence type="ECO:0000269" key="2">
    <source>
    </source>
</evidence>
<evidence type="ECO:0000269" key="3">
    <source>
    </source>
</evidence>
<evidence type="ECO:0000269" key="4">
    <source>
    </source>
</evidence>
<evidence type="ECO:0000269" key="5">
    <source>
    </source>
</evidence>
<evidence type="ECO:0000269" key="6">
    <source>
    </source>
</evidence>
<evidence type="ECO:0000269" key="7">
    <source>
    </source>
</evidence>
<evidence type="ECO:0000305" key="8"/>
<evidence type="ECO:0000305" key="9">
    <source>
    </source>
</evidence>
<evidence type="ECO:0000305" key="10">
    <source>
    </source>
</evidence>
<evidence type="ECO:0000305" key="11">
    <source>
    </source>
</evidence>
<evidence type="ECO:0007829" key="12">
    <source>
        <dbReference type="PDB" id="2C12"/>
    </source>
</evidence>
<evidence type="ECO:0007829" key="13">
    <source>
        <dbReference type="PDB" id="2ZAF"/>
    </source>
</evidence>
<comment type="function">
    <text evidence="1 3 7">Catalyzes the oxidative denitrification of neutral nitroalkanes, including 3-nitro-2-pentanol, 1-nitropropane, 2-nitropropane, nitroethane and nitrocyclohexane, and may thereby protect the organism against toxic compounds. Has no detectable acyl-CoA dehydrogenase activity.</text>
</comment>
<comment type="catalytic activity">
    <reaction evidence="1 2 4 5 7">
        <text>a primary nitroalkane + O2 + H2O = an aldehyde + nitrite + H2O2 + H(+)</text>
        <dbReference type="Rhea" id="RHEA:20976"/>
        <dbReference type="ChEBI" id="CHEBI:15377"/>
        <dbReference type="ChEBI" id="CHEBI:15378"/>
        <dbReference type="ChEBI" id="CHEBI:15379"/>
        <dbReference type="ChEBI" id="CHEBI:16240"/>
        <dbReference type="ChEBI" id="CHEBI:16301"/>
        <dbReference type="ChEBI" id="CHEBI:17478"/>
        <dbReference type="ChEBI" id="CHEBI:133972"/>
        <dbReference type="EC" id="1.7.3.1"/>
    </reaction>
</comment>
<comment type="catalytic activity">
    <reaction evidence="1 2 4 5 7">
        <text>a secondary nitroalkane + O2 + H2O = a ketone + nitrite + H2O2 + H(+)</text>
        <dbReference type="Rhea" id="RHEA:26490"/>
        <dbReference type="ChEBI" id="CHEBI:15377"/>
        <dbReference type="ChEBI" id="CHEBI:15378"/>
        <dbReference type="ChEBI" id="CHEBI:15379"/>
        <dbReference type="ChEBI" id="CHEBI:16240"/>
        <dbReference type="ChEBI" id="CHEBI:16301"/>
        <dbReference type="ChEBI" id="CHEBI:17087"/>
        <dbReference type="ChEBI" id="CHEBI:139218"/>
        <dbReference type="EC" id="1.7.3.1"/>
    </reaction>
</comment>
<comment type="cofactor">
    <cofactor evidence="1 3 4 5 6 7">
        <name>FAD</name>
        <dbReference type="ChEBI" id="CHEBI:57692"/>
    </cofactor>
</comment>
<comment type="activity regulation">
    <text evidence="7">Strongly inhibited by mercury chloride and KCN.</text>
</comment>
<comment type="biophysicochemical properties">
    <kinetics>
        <KM evidence="7">1.54 mM for 1-nitropropane</KM>
        <KM evidence="7">7.4 mM for 2-nitropropane</KM>
        <KM evidence="7">1 mM for nitroethane</KM>
        <KM evidence="7">3.1 mM for 3-nitro-2-pentanol</KM>
        <KM evidence="7">0.9 mM for nitrocyclohexane</KM>
        <KM evidence="7">1.33 uM for FAD</KM>
    </kinetics>
    <phDependence>
        <text evidence="7">Optimum pH is 8.0.</text>
    </phDependence>
    <temperatureDependence>
        <text evidence="7">Optimum temperature is 40 degrees Celsius.</text>
    </temperatureDependence>
</comment>
<comment type="subunit">
    <text evidence="3 4 6 7">Homotetramer.</text>
</comment>
<comment type="induction">
    <text evidence="7">Up-regulated by nitroethane.</text>
</comment>
<comment type="similarity">
    <text evidence="8">Belongs to the acyl-CoA dehydrogenase family.</text>
</comment>
<reference key="1">
    <citation type="journal article" date="2002" name="Proc. Natl. Acad. Sci. U.S.A.">
        <title>Cloning of nitroalkane oxidase from Fusarium oxysporum identifies a new member of the acyl-CoA dehydrogenase superfamily.</title>
        <authorList>
            <person name="Daubner S.C."/>
            <person name="Gadda G."/>
            <person name="Valley M.P."/>
            <person name="Fitzpatrick P.F."/>
        </authorList>
    </citation>
    <scope>NUCLEOTIDE SEQUENCE [MRNA]</scope>
    <scope>PARTIAL PROTEIN SEQUENCE</scope>
    <scope>CATALYTIC ACTIVITY</scope>
    <scope>FUNCTION</scope>
    <scope>MUTAGENESIS OF ASP-402</scope>
    <scope>ACTIVE SITE</scope>
    <scope>COFACTOR</scope>
    <source>
        <strain>ATCC 695</strain>
    </source>
</reference>
<reference key="2">
    <citation type="journal article" date="1978" name="J. Bacteriol.">
        <title>Purification and properties of nitroalkane oxidase from Fusarium oxysporum.</title>
        <authorList>
            <person name="Kido T."/>
            <person name="Hashizume K."/>
            <person name="Soda K."/>
        </authorList>
    </citation>
    <scope>CATALYTIC ACTIVITY</scope>
    <scope>FUNCTION</scope>
    <scope>BIOPHYSICOCHEMICAL PROPERTIES</scope>
    <scope>SUBUNIT</scope>
    <scope>COFACTOR</scope>
    <scope>ACTIVITY REGULATION</scope>
    <scope>INDUCTION</scope>
    <source>
        <strain>ATCC 659 / NBRC 5942 / DR 1004</strain>
    </source>
</reference>
<reference key="3">
    <citation type="journal article" date="2003" name="J. Am. Chem. Soc.">
        <title>Inactivation of nitroalkane oxidase upon mutation of the active site base and rescue with a deprotonated substrate.</title>
        <authorList>
            <person name="Valley M.P."/>
            <person name="Fitzpatrick P.F."/>
        </authorList>
    </citation>
    <scope>CATALYTIC ACTIVITY</scope>
    <scope>ACTIVE SITE</scope>
    <scope>MUTAGENESIS OF ASP-402</scope>
</reference>
<reference key="4">
    <citation type="journal article" date="2006" name="Biochemistry">
        <title>Crystal structures of nitroalkane oxidase: insights into the reaction mechanism from a covalent complex of the flavoenzyme trapped during turnover.</title>
        <authorList>
            <person name="Nagpal A."/>
            <person name="Valley M.P."/>
            <person name="Fitzpatrick P.F."/>
            <person name="Orville A.M."/>
        </authorList>
    </citation>
    <scope>X-RAY CRYSTALLOGRAPHY (2.07 ANGSTROMS) IN COMPLEX WITH THE SUBSTRATE NITROBUTANE AND FAD</scope>
    <scope>FUNCTION</scope>
    <scope>COFACTOR</scope>
    <scope>ACTIVE SITE</scope>
    <scope>SUBUNIT</scope>
</reference>
<reference key="5">
    <citation type="journal article" date="2007" name="Biochemistry">
        <title>Mechanistic and structural analyses of the roles of Arg409 and Asp402 in the reaction of the flavoprotein nitroalkane oxidase.</title>
        <authorList>
            <person name="Fitzpatrick P.F."/>
            <person name="Bozinovski D.M."/>
            <person name="Heroux A."/>
            <person name="Shaw P.G."/>
            <person name="Valley M.P."/>
            <person name="Orville A.M."/>
        </authorList>
    </citation>
    <scope>X-RAY CRYSTALLOGRAPHY (2.40 ANGSTROMS) OF MUTANT LYS-409 IN COMPLEX WITH FAD</scope>
    <scope>COFACTOR</scope>
    <scope>CATALYTIC ACTIVITY</scope>
    <scope>MUTAGENESIS OF ARG-409</scope>
</reference>
<reference key="6">
    <citation type="journal article" date="2009" name="Biochemistry">
        <title>Crystal structures of intermediates in the nitroalkane oxidase reaction.</title>
        <authorList>
            <person name="Heroux A."/>
            <person name="Bozinovski D.M."/>
            <person name="Valley M.P."/>
            <person name="Fitzpatrick P.F."/>
            <person name="Orville A.M."/>
        </authorList>
    </citation>
    <scope>X-RAY CRYSTALLOGRAPHY (2.10 ANGSTROMS) OF MUTANTS ALA-276 AND ASN-402 IN COMPLEXES WITH THE SUBSTRATE 1-NITROHEXANE AND FAD</scope>
    <scope>CATALYTIC ACTIVITY</scope>
    <scope>COFACTOR</scope>
    <scope>MUTAGENESIS OF SER-276 AND ASP-402</scope>
</reference>
<reference key="7">
    <citation type="journal article" date="2009" name="Proc. Natl. Acad. Sci. U.S.A.">
        <title>Differential quantum tunneling contributions in nitroalkane oxidase catalyzed and the uncatalyzed proton transfer reaction.</title>
        <authorList>
            <person name="Major D.T."/>
            <person name="Heroux A."/>
            <person name="Orville A.M."/>
            <person name="Valley M.P."/>
            <person name="Fitzpatrick P.F."/>
            <person name="Gao J."/>
        </authorList>
    </citation>
    <scope>X-RAY CRYSTALLOGRAPHY (2.40 ANGSTROMS) OF MUTANT ASN-402 IN COMPLEX WITH FAD AND THE SUBSTRATE NITROETHANE</scope>
    <scope>COFACTOR</scope>
</reference>
<proteinExistence type="evidence at protein level"/>
<accession>Q8X1D8</accession>